<sequence>MGEVSAIVLAASQAAEEGGESSNFLIPNGTFFVVLAIFLVVLAVIGTFVVPPILKVLRERDAMVAKTLADNKKSDEQFAAAQADYDEAMTEARVQASSLRDNARADGRKVIEDARVRAEQQVASTLQTAHEQLKRERDAVELDLRAHVGTMSATLASRILGVDLTASAATR</sequence>
<comment type="function">
    <text evidence="1">F(1)F(0) ATP synthase produces ATP from ADP in the presence of a proton or sodium gradient. F-type ATPases consist of two structural domains, F(1) containing the extramembraneous catalytic core and F(0) containing the membrane proton channel, linked together by a central stalk and a peripheral stalk. During catalysis, ATP synthesis in the catalytic domain of F(1) is coupled via a rotary mechanism of the central stalk subunits to proton translocation.</text>
</comment>
<comment type="function">
    <text evidence="1">Component of the F(0) channel, it forms part of the peripheral stalk, linking F(1) to F(0).</text>
</comment>
<comment type="subunit">
    <text evidence="1">F-type ATPases have 2 components, F(1) - the catalytic core - and F(0) - the membrane proton channel. F(1) has five subunits: alpha(3), beta(3), gamma(1), delta(1), epsilon(1). F(0) has three main subunits: a(1), b(2) and c(10-14). The alpha and beta chains form an alternating ring which encloses part of the gamma chain. F(1) is attached to F(0) by a central stalk formed by the gamma and epsilon chains, while a peripheral stalk is formed by the delta and b chains.</text>
</comment>
<comment type="subcellular location">
    <subcellularLocation>
        <location evidence="1">Cell membrane</location>
        <topology evidence="1">Single-pass membrane protein</topology>
    </subcellularLocation>
</comment>
<comment type="similarity">
    <text evidence="1">Belongs to the ATPase B chain family.</text>
</comment>
<organism>
    <name type="scientific">Mycobacterium bovis (strain BCG / Pasteur 1173P2)</name>
    <dbReference type="NCBI Taxonomy" id="410289"/>
    <lineage>
        <taxon>Bacteria</taxon>
        <taxon>Bacillati</taxon>
        <taxon>Actinomycetota</taxon>
        <taxon>Actinomycetes</taxon>
        <taxon>Mycobacteriales</taxon>
        <taxon>Mycobacteriaceae</taxon>
        <taxon>Mycobacterium</taxon>
        <taxon>Mycobacterium tuberculosis complex</taxon>
    </lineage>
</organism>
<reference key="1">
    <citation type="journal article" date="2007" name="Proc. Natl. Acad. Sci. U.S.A.">
        <title>Genome plasticity of BCG and impact on vaccine efficacy.</title>
        <authorList>
            <person name="Brosch R."/>
            <person name="Gordon S.V."/>
            <person name="Garnier T."/>
            <person name="Eiglmeier K."/>
            <person name="Frigui W."/>
            <person name="Valenti P."/>
            <person name="Dos Santos S."/>
            <person name="Duthoy S."/>
            <person name="Lacroix C."/>
            <person name="Garcia-Pelayo C."/>
            <person name="Inwald J.K."/>
            <person name="Golby P."/>
            <person name="Garcia J.N."/>
            <person name="Hewinson R.G."/>
            <person name="Behr M.A."/>
            <person name="Quail M.A."/>
            <person name="Churcher C."/>
            <person name="Barrell B.G."/>
            <person name="Parkhill J."/>
            <person name="Cole S.T."/>
        </authorList>
    </citation>
    <scope>NUCLEOTIDE SEQUENCE [LARGE SCALE GENOMIC DNA]</scope>
    <source>
        <strain>BCG / Pasteur 1173P2</strain>
    </source>
</reference>
<feature type="chain" id="PRO_0000368595" description="ATP synthase subunit b">
    <location>
        <begin position="1"/>
        <end position="171"/>
    </location>
</feature>
<feature type="transmembrane region" description="Helical" evidence="1">
    <location>
        <begin position="31"/>
        <end position="51"/>
    </location>
</feature>
<proteinExistence type="inferred from homology"/>
<protein>
    <recommendedName>
        <fullName evidence="1">ATP synthase subunit b</fullName>
    </recommendedName>
    <alternativeName>
        <fullName evidence="1">ATP synthase F(0) sector subunit b</fullName>
    </alternativeName>
    <alternativeName>
        <fullName evidence="1">ATPase subunit I</fullName>
    </alternativeName>
    <alternativeName>
        <fullName evidence="1">F-type ATPase subunit b</fullName>
        <shortName evidence="1">F-ATPase subunit b</shortName>
    </alternativeName>
</protein>
<keyword id="KW-0066">ATP synthesis</keyword>
<keyword id="KW-1003">Cell membrane</keyword>
<keyword id="KW-0138">CF(0)</keyword>
<keyword id="KW-0375">Hydrogen ion transport</keyword>
<keyword id="KW-0406">Ion transport</keyword>
<keyword id="KW-0472">Membrane</keyword>
<keyword id="KW-0812">Transmembrane</keyword>
<keyword id="KW-1133">Transmembrane helix</keyword>
<keyword id="KW-0813">Transport</keyword>
<accession>A1KI94</accession>
<gene>
    <name evidence="1" type="primary">atpF</name>
    <name type="ordered locus">BCG_1366</name>
</gene>
<name>ATPF_MYCBP</name>
<dbReference type="EMBL" id="AM408590">
    <property type="protein sequence ID" value="CAL71353.1"/>
    <property type="molecule type" value="Genomic_DNA"/>
</dbReference>
<dbReference type="RefSeq" id="WP_003898818.1">
    <property type="nucleotide sequence ID" value="NC_008769.1"/>
</dbReference>
<dbReference type="SMR" id="A1KI94"/>
<dbReference type="KEGG" id="mbb:BCG_1366"/>
<dbReference type="HOGENOM" id="CLU_079215_5_2_11"/>
<dbReference type="Proteomes" id="UP000001472">
    <property type="component" value="Chromosome"/>
</dbReference>
<dbReference type="GO" id="GO:0005886">
    <property type="term" value="C:plasma membrane"/>
    <property type="evidence" value="ECO:0007669"/>
    <property type="project" value="UniProtKB-SubCell"/>
</dbReference>
<dbReference type="GO" id="GO:0045259">
    <property type="term" value="C:proton-transporting ATP synthase complex"/>
    <property type="evidence" value="ECO:0007669"/>
    <property type="project" value="UniProtKB-KW"/>
</dbReference>
<dbReference type="GO" id="GO:0046933">
    <property type="term" value="F:proton-transporting ATP synthase activity, rotational mechanism"/>
    <property type="evidence" value="ECO:0007669"/>
    <property type="project" value="UniProtKB-UniRule"/>
</dbReference>
<dbReference type="GO" id="GO:0046961">
    <property type="term" value="F:proton-transporting ATPase activity, rotational mechanism"/>
    <property type="evidence" value="ECO:0007669"/>
    <property type="project" value="TreeGrafter"/>
</dbReference>
<dbReference type="CDD" id="cd06503">
    <property type="entry name" value="ATP-synt_Fo_b"/>
    <property type="match status" value="1"/>
</dbReference>
<dbReference type="Gene3D" id="1.20.5.620">
    <property type="entry name" value="F1F0 ATP synthase subunit B, membrane domain"/>
    <property type="match status" value="1"/>
</dbReference>
<dbReference type="HAMAP" id="MF_01398">
    <property type="entry name" value="ATP_synth_b_bprime"/>
    <property type="match status" value="1"/>
</dbReference>
<dbReference type="InterPro" id="IPR028987">
    <property type="entry name" value="ATP_synth_B-like_membr_sf"/>
</dbReference>
<dbReference type="InterPro" id="IPR002146">
    <property type="entry name" value="ATP_synth_b/b'su_bac/chlpt"/>
</dbReference>
<dbReference type="InterPro" id="IPR050059">
    <property type="entry name" value="ATP_synthase_B_chain"/>
</dbReference>
<dbReference type="NCBIfam" id="NF004412">
    <property type="entry name" value="PRK05759.1-3"/>
    <property type="match status" value="1"/>
</dbReference>
<dbReference type="PANTHER" id="PTHR33445:SF1">
    <property type="entry name" value="ATP SYNTHASE SUBUNIT B"/>
    <property type="match status" value="1"/>
</dbReference>
<dbReference type="PANTHER" id="PTHR33445">
    <property type="entry name" value="ATP SYNTHASE SUBUNIT B', CHLOROPLASTIC"/>
    <property type="match status" value="1"/>
</dbReference>
<dbReference type="Pfam" id="PF00430">
    <property type="entry name" value="ATP-synt_B"/>
    <property type="match status" value="1"/>
</dbReference>
<dbReference type="SUPFAM" id="SSF81573">
    <property type="entry name" value="F1F0 ATP synthase subunit B, membrane domain"/>
    <property type="match status" value="1"/>
</dbReference>
<evidence type="ECO:0000255" key="1">
    <source>
        <dbReference type="HAMAP-Rule" id="MF_01398"/>
    </source>
</evidence>